<evidence type="ECO:0000250" key="1">
    <source>
        <dbReference type="UniProtKB" id="Q60592"/>
    </source>
</evidence>
<evidence type="ECO:0000250" key="2">
    <source>
        <dbReference type="UniProtKB" id="Q8WU08"/>
    </source>
</evidence>
<evidence type="ECO:0000255" key="3">
    <source>
        <dbReference type="PROSITE-ProRule" id="PRU00159"/>
    </source>
</evidence>
<evidence type="ECO:0000255" key="4">
    <source>
        <dbReference type="PROSITE-ProRule" id="PRU10027"/>
    </source>
</evidence>
<evidence type="ECO:0000256" key="5">
    <source>
        <dbReference type="SAM" id="MobiDB-lite"/>
    </source>
</evidence>
<evidence type="ECO:0000269" key="6">
    <source>
    </source>
</evidence>
<evidence type="ECO:0000269" key="7">
    <source>
    </source>
</evidence>
<evidence type="ECO:0000303" key="8">
    <source>
    </source>
</evidence>
<evidence type="ECO:0000305" key="9"/>
<evidence type="ECO:0000312" key="10">
    <source>
        <dbReference type="EMBL" id="AAH55002.1"/>
    </source>
</evidence>
<evidence type="ECO:0000312" key="11">
    <source>
        <dbReference type="EMBL" id="BAC29366.1"/>
    </source>
</evidence>
<evidence type="ECO:0000312" key="12">
    <source>
        <dbReference type="EMBL" id="BAC31941.1"/>
    </source>
</evidence>
<evidence type="ECO:0000312" key="13">
    <source>
        <dbReference type="MGI" id="MGI:2442403"/>
    </source>
</evidence>
<sequence>MGANTSSKAPVFDENEDVNFDHFEILRAIGKGSFGKVCIVRKNDTKKMYAMKYMNKQKCVERNEVRNVFKELQIMQGLEHPFLVNLWYSFQDEEDMFMVVDLLLGGDLRYHLQQNVHFQEDTVKLFICELAMALDYLQSQRIIHRDMKPDNILLDEHGHVHITDFNIAAMLPKETRITTVAGTKPYMAPEMFTSRKETGYSFAVDWWSLGVTAYELLRGRRPYHIRSSTSSKEIVNMFETAIVTYPSAWSQEMVSLLKKLLEPNPDQRFSHLTDIQNFPYMSDMNWDAVLQKRLIPGFIPTKGRLNCDPTFELEEMILESKPLHKKKKRLAKREKEMKKSDSSQTCLLQEHLDAVQKEFIIFNREKVKSDFNQRQANLALEQTKNNTEEEEDGQNNNL</sequence>
<gene>
    <name evidence="13" type="primary">Stk32a</name>
</gene>
<reference evidence="9 11" key="1">
    <citation type="journal article" date="2005" name="Science">
        <title>The transcriptional landscape of the mammalian genome.</title>
        <authorList>
            <person name="Carninci P."/>
            <person name="Kasukawa T."/>
            <person name="Katayama S."/>
            <person name="Gough J."/>
            <person name="Frith M.C."/>
            <person name="Maeda N."/>
            <person name="Oyama R."/>
            <person name="Ravasi T."/>
            <person name="Lenhard B."/>
            <person name="Wells C."/>
            <person name="Kodzius R."/>
            <person name="Shimokawa K."/>
            <person name="Bajic V.B."/>
            <person name="Brenner S.E."/>
            <person name="Batalov S."/>
            <person name="Forrest A.R."/>
            <person name="Zavolan M."/>
            <person name="Davis M.J."/>
            <person name="Wilming L.G."/>
            <person name="Aidinis V."/>
            <person name="Allen J.E."/>
            <person name="Ambesi-Impiombato A."/>
            <person name="Apweiler R."/>
            <person name="Aturaliya R.N."/>
            <person name="Bailey T.L."/>
            <person name="Bansal M."/>
            <person name="Baxter L."/>
            <person name="Beisel K.W."/>
            <person name="Bersano T."/>
            <person name="Bono H."/>
            <person name="Chalk A.M."/>
            <person name="Chiu K.P."/>
            <person name="Choudhary V."/>
            <person name="Christoffels A."/>
            <person name="Clutterbuck D.R."/>
            <person name="Crowe M.L."/>
            <person name="Dalla E."/>
            <person name="Dalrymple B.P."/>
            <person name="de Bono B."/>
            <person name="Della Gatta G."/>
            <person name="di Bernardo D."/>
            <person name="Down T."/>
            <person name="Engstrom P."/>
            <person name="Fagiolini M."/>
            <person name="Faulkner G."/>
            <person name="Fletcher C.F."/>
            <person name="Fukushima T."/>
            <person name="Furuno M."/>
            <person name="Futaki S."/>
            <person name="Gariboldi M."/>
            <person name="Georgii-Hemming P."/>
            <person name="Gingeras T.R."/>
            <person name="Gojobori T."/>
            <person name="Green R.E."/>
            <person name="Gustincich S."/>
            <person name="Harbers M."/>
            <person name="Hayashi Y."/>
            <person name="Hensch T.K."/>
            <person name="Hirokawa N."/>
            <person name="Hill D."/>
            <person name="Huminiecki L."/>
            <person name="Iacono M."/>
            <person name="Ikeo K."/>
            <person name="Iwama A."/>
            <person name="Ishikawa T."/>
            <person name="Jakt M."/>
            <person name="Kanapin A."/>
            <person name="Katoh M."/>
            <person name="Kawasawa Y."/>
            <person name="Kelso J."/>
            <person name="Kitamura H."/>
            <person name="Kitano H."/>
            <person name="Kollias G."/>
            <person name="Krishnan S.P."/>
            <person name="Kruger A."/>
            <person name="Kummerfeld S.K."/>
            <person name="Kurochkin I.V."/>
            <person name="Lareau L.F."/>
            <person name="Lazarevic D."/>
            <person name="Lipovich L."/>
            <person name="Liu J."/>
            <person name="Liuni S."/>
            <person name="McWilliam S."/>
            <person name="Madan Babu M."/>
            <person name="Madera M."/>
            <person name="Marchionni L."/>
            <person name="Matsuda H."/>
            <person name="Matsuzawa S."/>
            <person name="Miki H."/>
            <person name="Mignone F."/>
            <person name="Miyake S."/>
            <person name="Morris K."/>
            <person name="Mottagui-Tabar S."/>
            <person name="Mulder N."/>
            <person name="Nakano N."/>
            <person name="Nakauchi H."/>
            <person name="Ng P."/>
            <person name="Nilsson R."/>
            <person name="Nishiguchi S."/>
            <person name="Nishikawa S."/>
            <person name="Nori F."/>
            <person name="Ohara O."/>
            <person name="Okazaki Y."/>
            <person name="Orlando V."/>
            <person name="Pang K.C."/>
            <person name="Pavan W.J."/>
            <person name="Pavesi G."/>
            <person name="Pesole G."/>
            <person name="Petrovsky N."/>
            <person name="Piazza S."/>
            <person name="Reed J."/>
            <person name="Reid J.F."/>
            <person name="Ring B.Z."/>
            <person name="Ringwald M."/>
            <person name="Rost B."/>
            <person name="Ruan Y."/>
            <person name="Salzberg S.L."/>
            <person name="Sandelin A."/>
            <person name="Schneider C."/>
            <person name="Schoenbach C."/>
            <person name="Sekiguchi K."/>
            <person name="Semple C.A."/>
            <person name="Seno S."/>
            <person name="Sessa L."/>
            <person name="Sheng Y."/>
            <person name="Shibata Y."/>
            <person name="Shimada H."/>
            <person name="Shimada K."/>
            <person name="Silva D."/>
            <person name="Sinclair B."/>
            <person name="Sperling S."/>
            <person name="Stupka E."/>
            <person name="Sugiura K."/>
            <person name="Sultana R."/>
            <person name="Takenaka Y."/>
            <person name="Taki K."/>
            <person name="Tammoja K."/>
            <person name="Tan S.L."/>
            <person name="Tang S."/>
            <person name="Taylor M.S."/>
            <person name="Tegner J."/>
            <person name="Teichmann S.A."/>
            <person name="Ueda H.R."/>
            <person name="van Nimwegen E."/>
            <person name="Verardo R."/>
            <person name="Wei C.L."/>
            <person name="Yagi K."/>
            <person name="Yamanishi H."/>
            <person name="Zabarovsky E."/>
            <person name="Zhu S."/>
            <person name="Zimmer A."/>
            <person name="Hide W."/>
            <person name="Bult C."/>
            <person name="Grimmond S.M."/>
            <person name="Teasdale R.D."/>
            <person name="Liu E.T."/>
            <person name="Brusic V."/>
            <person name="Quackenbush J."/>
            <person name="Wahlestedt C."/>
            <person name="Mattick J.S."/>
            <person name="Hume D.A."/>
            <person name="Kai C."/>
            <person name="Sasaki D."/>
            <person name="Tomaru Y."/>
            <person name="Fukuda S."/>
            <person name="Kanamori-Katayama M."/>
            <person name="Suzuki M."/>
            <person name="Aoki J."/>
            <person name="Arakawa T."/>
            <person name="Iida J."/>
            <person name="Imamura K."/>
            <person name="Itoh M."/>
            <person name="Kato T."/>
            <person name="Kawaji H."/>
            <person name="Kawagashira N."/>
            <person name="Kawashima T."/>
            <person name="Kojima M."/>
            <person name="Kondo S."/>
            <person name="Konno H."/>
            <person name="Nakano K."/>
            <person name="Ninomiya N."/>
            <person name="Nishio T."/>
            <person name="Okada M."/>
            <person name="Plessy C."/>
            <person name="Shibata K."/>
            <person name="Shiraki T."/>
            <person name="Suzuki S."/>
            <person name="Tagami M."/>
            <person name="Waki K."/>
            <person name="Watahiki A."/>
            <person name="Okamura-Oho Y."/>
            <person name="Suzuki H."/>
            <person name="Kawai J."/>
            <person name="Hayashizaki Y."/>
        </authorList>
    </citation>
    <scope>NUCLEOTIDE SEQUENCE [LARGE SCALE MRNA] (ISOFORM 1)</scope>
    <source>
        <strain evidence="11">C57BL/6J</strain>
        <tissue evidence="11">Cerebellum</tissue>
        <tissue evidence="12">Retina</tissue>
    </source>
</reference>
<reference evidence="9 10" key="2">
    <citation type="journal article" date="2004" name="Genome Res.">
        <title>The status, quality, and expansion of the NIH full-length cDNA project: the Mammalian Gene Collection (MGC).</title>
        <authorList>
            <consortium name="The MGC Project Team"/>
        </authorList>
    </citation>
    <scope>NUCLEOTIDE SEQUENCE [LARGE SCALE MRNA] (ISOFORM 2)</scope>
    <source>
        <tissue evidence="10">Olfactory epithelium</tissue>
    </source>
</reference>
<comment type="catalytic activity">
    <reaction evidence="1">
        <text>L-seryl-[protein] + ATP = O-phospho-L-seryl-[protein] + ADP + H(+)</text>
        <dbReference type="Rhea" id="RHEA:17989"/>
        <dbReference type="Rhea" id="RHEA-COMP:9863"/>
        <dbReference type="Rhea" id="RHEA-COMP:11604"/>
        <dbReference type="ChEBI" id="CHEBI:15378"/>
        <dbReference type="ChEBI" id="CHEBI:29999"/>
        <dbReference type="ChEBI" id="CHEBI:30616"/>
        <dbReference type="ChEBI" id="CHEBI:83421"/>
        <dbReference type="ChEBI" id="CHEBI:456216"/>
        <dbReference type="EC" id="2.7.11.1"/>
    </reaction>
</comment>
<comment type="catalytic activity">
    <reaction evidence="1">
        <text>L-threonyl-[protein] + ATP = O-phospho-L-threonyl-[protein] + ADP + H(+)</text>
        <dbReference type="Rhea" id="RHEA:46608"/>
        <dbReference type="Rhea" id="RHEA-COMP:11060"/>
        <dbReference type="Rhea" id="RHEA-COMP:11605"/>
        <dbReference type="ChEBI" id="CHEBI:15378"/>
        <dbReference type="ChEBI" id="CHEBI:30013"/>
        <dbReference type="ChEBI" id="CHEBI:30616"/>
        <dbReference type="ChEBI" id="CHEBI:61977"/>
        <dbReference type="ChEBI" id="CHEBI:456216"/>
        <dbReference type="EC" id="2.7.11.1"/>
    </reaction>
</comment>
<comment type="cofactor">
    <cofactor evidence="1">
        <name>Mg(2+)</name>
        <dbReference type="ChEBI" id="CHEBI:18420"/>
    </cofactor>
</comment>
<comment type="subcellular location">
    <subcellularLocation>
        <location>Cell membrane</location>
        <topology evidence="2">Lipid-anchor</topology>
    </subcellularLocation>
</comment>
<comment type="alternative products">
    <event type="alternative splicing"/>
    <isoform>
        <id>Q8BGW6-1</id>
        <name evidence="7">1</name>
        <sequence type="displayed"/>
    </isoform>
    <isoform>
        <id>Q8BGW6-2</id>
        <name evidence="6">2</name>
        <sequence type="described" ref="VSP_051996"/>
    </isoform>
</comment>
<comment type="similarity">
    <text evidence="3">Belongs to the protein kinase superfamily. Ser/Thr protein kinase family.</text>
</comment>
<protein>
    <recommendedName>
        <fullName>Serine/threonine-protein kinase 32A</fullName>
        <ecNumber>2.7.11.1</ecNumber>
    </recommendedName>
</protein>
<keyword id="KW-0025">Alternative splicing</keyword>
<keyword id="KW-0067">ATP-binding</keyword>
<keyword id="KW-1003">Cell membrane</keyword>
<keyword id="KW-0418">Kinase</keyword>
<keyword id="KW-0449">Lipoprotein</keyword>
<keyword id="KW-0460">Magnesium</keyword>
<keyword id="KW-0472">Membrane</keyword>
<keyword id="KW-0479">Metal-binding</keyword>
<keyword id="KW-0519">Myristate</keyword>
<keyword id="KW-0547">Nucleotide-binding</keyword>
<keyword id="KW-1185">Reference proteome</keyword>
<keyword id="KW-0723">Serine/threonine-protein kinase</keyword>
<keyword id="KW-0808">Transferase</keyword>
<dbReference type="EC" id="2.7.11.1"/>
<dbReference type="EMBL" id="AK036266">
    <property type="protein sequence ID" value="BAC29366.1"/>
    <property type="molecule type" value="mRNA"/>
</dbReference>
<dbReference type="EMBL" id="AK042599">
    <property type="protein sequence ID" value="BAC31302.1"/>
    <property type="molecule type" value="mRNA"/>
</dbReference>
<dbReference type="EMBL" id="AK044474">
    <property type="protein sequence ID" value="BAC31941.1"/>
    <property type="molecule type" value="mRNA"/>
</dbReference>
<dbReference type="EMBL" id="BC055002">
    <property type="protein sequence ID" value="AAH55002.1"/>
    <property type="molecule type" value="mRNA"/>
</dbReference>
<dbReference type="CCDS" id="CCDS29218.1">
    <molecule id="Q8BGW6-1"/>
</dbReference>
<dbReference type="RefSeq" id="NP_848864.1">
    <molecule id="Q8BGW6-1"/>
    <property type="nucleotide sequence ID" value="NM_178749.3"/>
</dbReference>
<dbReference type="SMR" id="Q8BGW6"/>
<dbReference type="FunCoup" id="Q8BGW6">
    <property type="interactions" value="533"/>
</dbReference>
<dbReference type="STRING" id="10090.ENSMUSP00000038471"/>
<dbReference type="iPTMnet" id="Q8BGW6"/>
<dbReference type="PhosphoSitePlus" id="Q8BGW6"/>
<dbReference type="PaxDb" id="10090-ENSMUSP00000038471"/>
<dbReference type="PeptideAtlas" id="Q8BGW6"/>
<dbReference type="ProteomicsDB" id="257429">
    <molecule id="Q8BGW6-1"/>
</dbReference>
<dbReference type="ProteomicsDB" id="257430">
    <molecule id="Q8BGW6-2"/>
</dbReference>
<dbReference type="Antibodypedia" id="27607">
    <property type="antibodies" value="230 antibodies from 27 providers"/>
</dbReference>
<dbReference type="DNASU" id="269019"/>
<dbReference type="Ensembl" id="ENSMUST00000045477.6">
    <molecule id="Q8BGW6-1"/>
    <property type="protein sequence ID" value="ENSMUSP00000038471.5"/>
    <property type="gene ID" value="ENSMUSG00000039954.10"/>
</dbReference>
<dbReference type="Ensembl" id="ENSMUST00000237797.2">
    <molecule id="Q8BGW6-2"/>
    <property type="protein sequence ID" value="ENSMUSP00000158482.2"/>
    <property type="gene ID" value="ENSMUSG00000039954.10"/>
</dbReference>
<dbReference type="GeneID" id="269019"/>
<dbReference type="KEGG" id="mmu:269019"/>
<dbReference type="UCSC" id="uc008eue.1">
    <molecule id="Q8BGW6-1"/>
    <property type="organism name" value="mouse"/>
</dbReference>
<dbReference type="UCSC" id="uc012bcj.1">
    <molecule id="Q8BGW6-2"/>
    <property type="organism name" value="mouse"/>
</dbReference>
<dbReference type="AGR" id="MGI:2442403"/>
<dbReference type="CTD" id="202374"/>
<dbReference type="MGI" id="MGI:2442403">
    <property type="gene designation" value="Stk32a"/>
</dbReference>
<dbReference type="VEuPathDB" id="HostDB:ENSMUSG00000039954"/>
<dbReference type="eggNOG" id="KOG0598">
    <property type="taxonomic scope" value="Eukaryota"/>
</dbReference>
<dbReference type="GeneTree" id="ENSGT00940000158185"/>
<dbReference type="HOGENOM" id="CLU_000288_63_5_1"/>
<dbReference type="InParanoid" id="Q8BGW6"/>
<dbReference type="OMA" id="MRITTMA"/>
<dbReference type="OrthoDB" id="354826at2759"/>
<dbReference type="PhylomeDB" id="Q8BGW6"/>
<dbReference type="TreeFam" id="TF313395"/>
<dbReference type="BioGRID-ORCS" id="269019">
    <property type="hits" value="3 hits in 80 CRISPR screens"/>
</dbReference>
<dbReference type="ChiTaRS" id="Stk32a">
    <property type="organism name" value="mouse"/>
</dbReference>
<dbReference type="PRO" id="PR:Q8BGW6"/>
<dbReference type="Proteomes" id="UP000000589">
    <property type="component" value="Chromosome 18"/>
</dbReference>
<dbReference type="RNAct" id="Q8BGW6">
    <property type="molecule type" value="protein"/>
</dbReference>
<dbReference type="Bgee" id="ENSMUSG00000039954">
    <property type="expression patterns" value="Expressed in caudate-putamen and 102 other cell types or tissues"/>
</dbReference>
<dbReference type="ExpressionAtlas" id="Q8BGW6">
    <property type="expression patterns" value="baseline and differential"/>
</dbReference>
<dbReference type="GO" id="GO:0005886">
    <property type="term" value="C:plasma membrane"/>
    <property type="evidence" value="ECO:0007669"/>
    <property type="project" value="UniProtKB-SubCell"/>
</dbReference>
<dbReference type="GO" id="GO:0005524">
    <property type="term" value="F:ATP binding"/>
    <property type="evidence" value="ECO:0007669"/>
    <property type="project" value="UniProtKB-KW"/>
</dbReference>
<dbReference type="GO" id="GO:0046872">
    <property type="term" value="F:metal ion binding"/>
    <property type="evidence" value="ECO:0007669"/>
    <property type="project" value="UniProtKB-KW"/>
</dbReference>
<dbReference type="GO" id="GO:0106310">
    <property type="term" value="F:protein serine kinase activity"/>
    <property type="evidence" value="ECO:0007669"/>
    <property type="project" value="RHEA"/>
</dbReference>
<dbReference type="GO" id="GO:0004674">
    <property type="term" value="F:protein serine/threonine kinase activity"/>
    <property type="evidence" value="ECO:0007669"/>
    <property type="project" value="UniProtKB-KW"/>
</dbReference>
<dbReference type="CDD" id="cd05578">
    <property type="entry name" value="STKc_Yank1"/>
    <property type="match status" value="1"/>
</dbReference>
<dbReference type="FunFam" id="1.10.510.10:FF:000169">
    <property type="entry name" value="Serine/threonine-protein kinase 32A"/>
    <property type="match status" value="1"/>
</dbReference>
<dbReference type="FunFam" id="3.30.200.20:FF:000158">
    <property type="entry name" value="Serine/threonine-protein kinase 32A"/>
    <property type="match status" value="1"/>
</dbReference>
<dbReference type="FunFam" id="3.30.200.20:FF:000160">
    <property type="entry name" value="Serine/threonine-protein kinase 32C"/>
    <property type="match status" value="1"/>
</dbReference>
<dbReference type="Gene3D" id="3.30.200.20">
    <property type="entry name" value="Phosphorylase Kinase, domain 1"/>
    <property type="match status" value="2"/>
</dbReference>
<dbReference type="Gene3D" id="1.10.510.10">
    <property type="entry name" value="Transferase(Phosphotransferase) domain 1"/>
    <property type="match status" value="1"/>
</dbReference>
<dbReference type="InterPro" id="IPR011009">
    <property type="entry name" value="Kinase-like_dom_sf"/>
</dbReference>
<dbReference type="InterPro" id="IPR000719">
    <property type="entry name" value="Prot_kinase_dom"/>
</dbReference>
<dbReference type="InterPro" id="IPR017441">
    <property type="entry name" value="Protein_kinase_ATP_BS"/>
</dbReference>
<dbReference type="InterPro" id="IPR008271">
    <property type="entry name" value="Ser/Thr_kinase_AS"/>
</dbReference>
<dbReference type="PANTHER" id="PTHR24355">
    <property type="entry name" value="G PROTEIN-COUPLED RECEPTOR KINASE/RIBOSOMAL PROTEIN S6 KINASE"/>
    <property type="match status" value="1"/>
</dbReference>
<dbReference type="PANTHER" id="PTHR24355:SF31">
    <property type="entry name" value="SERINE_THREONINE KINASE 32A"/>
    <property type="match status" value="1"/>
</dbReference>
<dbReference type="Pfam" id="PF00069">
    <property type="entry name" value="Pkinase"/>
    <property type="match status" value="1"/>
</dbReference>
<dbReference type="SMART" id="SM00220">
    <property type="entry name" value="S_TKc"/>
    <property type="match status" value="1"/>
</dbReference>
<dbReference type="SUPFAM" id="SSF56112">
    <property type="entry name" value="Protein kinase-like (PK-like)"/>
    <property type="match status" value="1"/>
</dbReference>
<dbReference type="PROSITE" id="PS00107">
    <property type="entry name" value="PROTEIN_KINASE_ATP"/>
    <property type="match status" value="1"/>
</dbReference>
<dbReference type="PROSITE" id="PS50011">
    <property type="entry name" value="PROTEIN_KINASE_DOM"/>
    <property type="match status" value="1"/>
</dbReference>
<dbReference type="PROSITE" id="PS00108">
    <property type="entry name" value="PROTEIN_KINASE_ST"/>
    <property type="match status" value="1"/>
</dbReference>
<name>ST32A_MOUSE</name>
<proteinExistence type="evidence at transcript level"/>
<organism>
    <name type="scientific">Mus musculus</name>
    <name type="common">Mouse</name>
    <dbReference type="NCBI Taxonomy" id="10090"/>
    <lineage>
        <taxon>Eukaryota</taxon>
        <taxon>Metazoa</taxon>
        <taxon>Chordata</taxon>
        <taxon>Craniata</taxon>
        <taxon>Vertebrata</taxon>
        <taxon>Euteleostomi</taxon>
        <taxon>Mammalia</taxon>
        <taxon>Eutheria</taxon>
        <taxon>Euarchontoglires</taxon>
        <taxon>Glires</taxon>
        <taxon>Rodentia</taxon>
        <taxon>Myomorpha</taxon>
        <taxon>Muroidea</taxon>
        <taxon>Muridae</taxon>
        <taxon>Murinae</taxon>
        <taxon>Mus</taxon>
        <taxon>Mus</taxon>
    </lineage>
</organism>
<accession>Q8BGW6</accession>
<accession>Q7TPQ4</accession>
<feature type="initiator methionine" description="Removed">
    <location>
        <position position="1"/>
    </location>
</feature>
<feature type="chain" id="PRO_0000232412" description="Serine/threonine-protein kinase 32A">
    <location>
        <begin position="2"/>
        <end position="398"/>
    </location>
</feature>
<feature type="domain" description="Protein kinase" evidence="3">
    <location>
        <begin position="23"/>
        <end position="281"/>
    </location>
</feature>
<feature type="region of interest" description="Disordered" evidence="5">
    <location>
        <begin position="379"/>
        <end position="398"/>
    </location>
</feature>
<feature type="compositionally biased region" description="Acidic residues" evidence="5">
    <location>
        <begin position="388"/>
        <end position="398"/>
    </location>
</feature>
<feature type="active site" description="Proton acceptor" evidence="1 3 4">
    <location>
        <position position="146"/>
    </location>
</feature>
<feature type="binding site" evidence="1 3">
    <location>
        <begin position="29"/>
        <end position="37"/>
    </location>
    <ligand>
        <name>ATP</name>
        <dbReference type="ChEBI" id="CHEBI:30616"/>
    </ligand>
</feature>
<feature type="binding site" evidence="1 3">
    <location>
        <position position="52"/>
    </location>
    <ligand>
        <name>ATP</name>
        <dbReference type="ChEBI" id="CHEBI:30616"/>
    </ligand>
</feature>
<feature type="lipid moiety-binding region" description="N-myristoyl glycine" evidence="2">
    <location>
        <position position="2"/>
    </location>
</feature>
<feature type="splice variant" id="VSP_051996" description="In isoform 2." evidence="8">
    <location>
        <begin position="158"/>
        <end position="187"/>
    </location>
</feature>